<feature type="chain" id="PRO_0000108940" description="Putative glycosyltransferase SCO3672">
    <location>
        <begin position="1"/>
        <end position="411"/>
    </location>
</feature>
<feature type="transmembrane region" description="Helical" evidence="1">
    <location>
        <begin position="7"/>
        <end position="27"/>
    </location>
</feature>
<feature type="transmembrane region" description="Helical" evidence="1">
    <location>
        <begin position="45"/>
        <end position="65"/>
    </location>
</feature>
<feature type="transmembrane region" description="Helical" evidence="1">
    <location>
        <begin position="70"/>
        <end position="90"/>
    </location>
</feature>
<feature type="transmembrane region" description="Helical" evidence="1">
    <location>
        <begin position="120"/>
        <end position="140"/>
    </location>
</feature>
<feature type="transmembrane region" description="Helical" evidence="1">
    <location>
        <begin position="148"/>
        <end position="168"/>
    </location>
</feature>
<feature type="transmembrane region" description="Helical" evidence="1">
    <location>
        <begin position="169"/>
        <end position="189"/>
    </location>
</feature>
<feature type="transmembrane region" description="Helical" evidence="1">
    <location>
        <begin position="197"/>
        <end position="217"/>
    </location>
</feature>
<feature type="transmembrane region" description="Helical" evidence="1">
    <location>
        <begin position="227"/>
        <end position="247"/>
    </location>
</feature>
<feature type="transmembrane region" description="Helical" evidence="1">
    <location>
        <begin position="277"/>
        <end position="297"/>
    </location>
</feature>
<feature type="transmembrane region" description="Helical" evidence="1">
    <location>
        <begin position="301"/>
        <end position="321"/>
    </location>
</feature>
<feature type="sequence conflict" description="In Ref. 1; CAA54605." evidence="2" ref="1">
    <original>A</original>
    <variation>R</variation>
    <location>
        <position position="195"/>
    </location>
</feature>
<name>Y3672_STRCO</name>
<reference key="1">
    <citation type="journal article" date="1996" name="DNA Seq.">
        <title>Cloning and sequencing of the dnaK locus in Streptomyces coelicolor A3(2).</title>
        <authorList>
            <person name="Brans A."/>
            <person name="Loriaux A."/>
            <person name="Joris B."/>
            <person name="Dusart J."/>
        </authorList>
    </citation>
    <scope>NUCLEOTIDE SEQUENCE [GENOMIC DNA]</scope>
    <source>
        <strain>A3(2) / NRRL B-16638</strain>
    </source>
</reference>
<reference key="2">
    <citation type="journal article" date="2002" name="Nature">
        <title>Complete genome sequence of the model actinomycete Streptomyces coelicolor A3(2).</title>
        <authorList>
            <person name="Bentley S.D."/>
            <person name="Chater K.F."/>
            <person name="Cerdeno-Tarraga A.-M."/>
            <person name="Challis G.L."/>
            <person name="Thomson N.R."/>
            <person name="James K.D."/>
            <person name="Harris D.E."/>
            <person name="Quail M.A."/>
            <person name="Kieser H."/>
            <person name="Harper D."/>
            <person name="Bateman A."/>
            <person name="Brown S."/>
            <person name="Chandra G."/>
            <person name="Chen C.W."/>
            <person name="Collins M."/>
            <person name="Cronin A."/>
            <person name="Fraser A."/>
            <person name="Goble A."/>
            <person name="Hidalgo J."/>
            <person name="Hornsby T."/>
            <person name="Howarth S."/>
            <person name="Huang C.-H."/>
            <person name="Kieser T."/>
            <person name="Larke L."/>
            <person name="Murphy L.D."/>
            <person name="Oliver K."/>
            <person name="O'Neil S."/>
            <person name="Rabbinowitsch E."/>
            <person name="Rajandream M.A."/>
            <person name="Rutherford K.M."/>
            <person name="Rutter S."/>
            <person name="Seeger K."/>
            <person name="Saunders D."/>
            <person name="Sharp S."/>
            <person name="Squares R."/>
            <person name="Squares S."/>
            <person name="Taylor K."/>
            <person name="Warren T."/>
            <person name="Wietzorrek A."/>
            <person name="Woodward J.R."/>
            <person name="Barrell B.G."/>
            <person name="Parkhill J."/>
            <person name="Hopwood D.A."/>
        </authorList>
    </citation>
    <scope>NUCLEOTIDE SEQUENCE [LARGE SCALE GENOMIC DNA]</scope>
    <source>
        <strain>ATCC BAA-471 / A3(2) / M145</strain>
    </source>
</reference>
<dbReference type="EC" id="2.-.-.-"/>
<dbReference type="EMBL" id="X77458">
    <property type="protein sequence ID" value="CAA54605.1"/>
    <property type="molecule type" value="Genomic_DNA"/>
</dbReference>
<dbReference type="EMBL" id="AL939117">
    <property type="protein sequence ID" value="CAB44375.1"/>
    <property type="molecule type" value="Genomic_DNA"/>
</dbReference>
<dbReference type="PIR" id="S41945">
    <property type="entry name" value="S41945"/>
</dbReference>
<dbReference type="RefSeq" id="NP_627864.1">
    <property type="nucleotide sequence ID" value="NC_003888.3"/>
</dbReference>
<dbReference type="RefSeq" id="WP_011029155.1">
    <property type="nucleotide sequence ID" value="NZ_VNID01000003.1"/>
</dbReference>
<dbReference type="SMR" id="P40180"/>
<dbReference type="STRING" id="100226.gene:17761295"/>
<dbReference type="PaxDb" id="100226-SCO3672"/>
<dbReference type="KEGG" id="sco:SCO3672"/>
<dbReference type="PATRIC" id="fig|100226.15.peg.3730"/>
<dbReference type="eggNOG" id="COG0472">
    <property type="taxonomic scope" value="Bacteria"/>
</dbReference>
<dbReference type="HOGENOM" id="CLU_048568_0_0_11"/>
<dbReference type="InParanoid" id="P40180"/>
<dbReference type="OrthoDB" id="5178981at2"/>
<dbReference type="Proteomes" id="UP000001973">
    <property type="component" value="Chromosome"/>
</dbReference>
<dbReference type="GO" id="GO:0005886">
    <property type="term" value="C:plasma membrane"/>
    <property type="evidence" value="ECO:0000318"/>
    <property type="project" value="GO_Central"/>
</dbReference>
<dbReference type="GO" id="GO:0016780">
    <property type="term" value="F:phosphotransferase activity, for other substituted phosphate groups"/>
    <property type="evidence" value="ECO:0000318"/>
    <property type="project" value="GO_Central"/>
</dbReference>
<dbReference type="GO" id="GO:0044038">
    <property type="term" value="P:cell wall macromolecule biosynthetic process"/>
    <property type="evidence" value="ECO:0000318"/>
    <property type="project" value="GO_Central"/>
</dbReference>
<dbReference type="GO" id="GO:0071555">
    <property type="term" value="P:cell wall organization"/>
    <property type="evidence" value="ECO:0000318"/>
    <property type="project" value="GO_Central"/>
</dbReference>
<dbReference type="GO" id="GO:0009103">
    <property type="term" value="P:lipopolysaccharide biosynthetic process"/>
    <property type="evidence" value="ECO:0000318"/>
    <property type="project" value="GO_Central"/>
</dbReference>
<dbReference type="CDD" id="cd06853">
    <property type="entry name" value="GT_WecA_like"/>
    <property type="match status" value="1"/>
</dbReference>
<dbReference type="InterPro" id="IPR000715">
    <property type="entry name" value="Glycosyl_transferase_4"/>
</dbReference>
<dbReference type="PANTHER" id="PTHR22926">
    <property type="entry name" value="PHOSPHO-N-ACETYLMURAMOYL-PENTAPEPTIDE-TRANSFERASE"/>
    <property type="match status" value="1"/>
</dbReference>
<dbReference type="PANTHER" id="PTHR22926:SF3">
    <property type="entry name" value="UNDECAPRENYL-PHOSPHATE ALPHA-N-ACETYLGLUCOSAMINYL 1-PHOSPHATE TRANSFERASE"/>
    <property type="match status" value="1"/>
</dbReference>
<dbReference type="Pfam" id="PF00953">
    <property type="entry name" value="Glycos_transf_4"/>
    <property type="match status" value="1"/>
</dbReference>
<gene>
    <name type="ordered locus">SCO3672</name>
    <name type="ORF">SCH35.52</name>
</gene>
<keyword id="KW-1003">Cell membrane</keyword>
<keyword id="KW-0472">Membrane</keyword>
<keyword id="KW-1185">Reference proteome</keyword>
<keyword id="KW-0808">Transferase</keyword>
<keyword id="KW-0812">Transmembrane</keyword>
<keyword id="KW-1133">Transmembrane helix</keyword>
<accession>P40180</accession>
<accession>Q9S6U5</accession>
<sequence>MSVLYGIAAATVTATASFLLTAVLAALLRAPALRLAVVDRRRRRPVPLLGGVAVVLVTAVVAWAGDRAGVVPLGPAAGRLLAAATVVGALGLAADVWRLRRRWLLAGTAVAAACVVPYGETGPVAGALAVGWVALVTGAFRGLDHADGVVGTVGVVTAFGVGACAAVELMDGPAVLLLVLAAALAGFLLHNWHPARIALGACGSLFTGFLLTGAAVLARTGYGPVGGAGVLCALTAVPVADAVLVLLSRRLAGRPLSRGGPDHLAHRLRRLGLTAQGVVVVLGGAALCAVVVGVLAHTGRVGGQAALWVAGGAAAGVLGLLRVRVYGPARLRRGAGVRAPVRRAGRGARAWAVVRRPRTAMRRARAGVSQAPRGATGAAGGASFRAAIFPVRQATSTENVQVGAPLRVRNG</sequence>
<comment type="subcellular location">
    <subcellularLocation>
        <location evidence="2">Cell membrane</location>
        <topology evidence="2">Multi-pass membrane protein</topology>
    </subcellularLocation>
</comment>
<comment type="similarity">
    <text evidence="2">Belongs to the glycosyltransferase 4 family.</text>
</comment>
<organism>
    <name type="scientific">Streptomyces coelicolor (strain ATCC BAA-471 / A3(2) / M145)</name>
    <dbReference type="NCBI Taxonomy" id="100226"/>
    <lineage>
        <taxon>Bacteria</taxon>
        <taxon>Bacillati</taxon>
        <taxon>Actinomycetota</taxon>
        <taxon>Actinomycetes</taxon>
        <taxon>Kitasatosporales</taxon>
        <taxon>Streptomycetaceae</taxon>
        <taxon>Streptomyces</taxon>
        <taxon>Streptomyces albidoflavus group</taxon>
    </lineage>
</organism>
<evidence type="ECO:0000255" key="1"/>
<evidence type="ECO:0000305" key="2"/>
<protein>
    <recommendedName>
        <fullName>Putative glycosyltransferase SCO3672</fullName>
        <ecNumber>2.-.-.-</ecNumber>
    </recommendedName>
</protein>
<proteinExistence type="inferred from homology"/>